<sequence length="268" mass="29269">MSTDILRKIEAYKREEIAAAKARLALDELKARTRDQSAPRGFLKALEAKRAAGQFALIAEIKKASPSKGLIRPDFDPPALAKAYEEGGAACLSVLTDTPSFQGAPEFLTAARQACSLPALRKDFLFDPYQVYEARSWGADCILIIMASVDDDLAKELEDTAFALGMDALIEVHDEAEMERALKLSSRLLGVNNRNLRSFEVNLAVSERLAKMAPSDRLLVGESGIFTHEDCLRLEKSGIGTFLIGESLMRQHDVAAATRALLTGAEKL</sequence>
<reference key="1">
    <citation type="journal article" date="2005" name="Infect. Immun.">
        <title>Whole-genome analyses of speciation events in pathogenic Brucellae.</title>
        <authorList>
            <person name="Chain P.S."/>
            <person name="Comerci D.J."/>
            <person name="Tolmasky M.E."/>
            <person name="Larimer F.W."/>
            <person name="Malfatti S.A."/>
            <person name="Vergez L.M."/>
            <person name="Aguero F."/>
            <person name="Land M.L."/>
            <person name="Ugalde R.A."/>
            <person name="Garcia E."/>
        </authorList>
    </citation>
    <scope>NUCLEOTIDE SEQUENCE [LARGE SCALE GENOMIC DNA]</scope>
    <source>
        <strain>2308</strain>
    </source>
</reference>
<accession>Q2YRR4</accession>
<organism>
    <name type="scientific">Brucella abortus (strain 2308)</name>
    <dbReference type="NCBI Taxonomy" id="359391"/>
    <lineage>
        <taxon>Bacteria</taxon>
        <taxon>Pseudomonadati</taxon>
        <taxon>Pseudomonadota</taxon>
        <taxon>Alphaproteobacteria</taxon>
        <taxon>Hyphomicrobiales</taxon>
        <taxon>Brucellaceae</taxon>
        <taxon>Brucella/Ochrobactrum group</taxon>
        <taxon>Brucella</taxon>
    </lineage>
</organism>
<keyword id="KW-0002">3D-structure</keyword>
<keyword id="KW-0028">Amino-acid biosynthesis</keyword>
<keyword id="KW-0057">Aromatic amino acid biosynthesis</keyword>
<keyword id="KW-0210">Decarboxylase</keyword>
<keyword id="KW-0456">Lyase</keyword>
<keyword id="KW-1185">Reference proteome</keyword>
<keyword id="KW-0822">Tryptophan biosynthesis</keyword>
<name>TRPC_BRUA2</name>
<feature type="chain" id="PRO_1000018448" description="Indole-3-glycerol phosphate synthase">
    <location>
        <begin position="1"/>
        <end position="268"/>
    </location>
</feature>
<feature type="helix" evidence="2">
    <location>
        <begin position="5"/>
        <end position="34"/>
    </location>
</feature>
<feature type="helix" evidence="2">
    <location>
        <begin position="42"/>
        <end position="51"/>
    </location>
</feature>
<feature type="strand" evidence="2">
    <location>
        <begin position="56"/>
        <end position="61"/>
    </location>
</feature>
<feature type="strand" evidence="2">
    <location>
        <begin position="63"/>
        <end position="65"/>
    </location>
</feature>
<feature type="turn" evidence="2">
    <location>
        <begin position="66"/>
        <end position="68"/>
    </location>
</feature>
<feature type="strand" evidence="2">
    <location>
        <begin position="69"/>
        <end position="71"/>
    </location>
</feature>
<feature type="helix" evidence="2">
    <location>
        <begin position="77"/>
        <end position="86"/>
    </location>
</feature>
<feature type="strand" evidence="2">
    <location>
        <begin position="90"/>
        <end position="95"/>
    </location>
</feature>
<feature type="turn" evidence="2">
    <location>
        <begin position="99"/>
        <end position="101"/>
    </location>
</feature>
<feature type="helix" evidence="2">
    <location>
        <begin position="105"/>
        <end position="113"/>
    </location>
</feature>
<feature type="strand" evidence="2">
    <location>
        <begin position="115"/>
        <end position="117"/>
    </location>
</feature>
<feature type="strand" evidence="2">
    <location>
        <begin position="119"/>
        <end position="123"/>
    </location>
</feature>
<feature type="helix" evidence="2">
    <location>
        <begin position="129"/>
        <end position="136"/>
    </location>
</feature>
<feature type="strand" evidence="2">
    <location>
        <begin position="140"/>
        <end position="145"/>
    </location>
</feature>
<feature type="turn" evidence="2">
    <location>
        <begin position="146"/>
        <end position="148"/>
    </location>
</feature>
<feature type="helix" evidence="2">
    <location>
        <begin position="151"/>
        <end position="163"/>
    </location>
</feature>
<feature type="strand" evidence="2">
    <location>
        <begin position="167"/>
        <end position="172"/>
    </location>
</feature>
<feature type="helix" evidence="2">
    <location>
        <begin position="175"/>
        <end position="181"/>
    </location>
</feature>
<feature type="strand" evidence="2">
    <location>
        <begin position="187"/>
        <end position="192"/>
    </location>
</feature>
<feature type="turn" evidence="2">
    <location>
        <begin position="196"/>
        <end position="198"/>
    </location>
</feature>
<feature type="helix" evidence="2">
    <location>
        <begin position="204"/>
        <end position="212"/>
    </location>
</feature>
<feature type="strand" evidence="2">
    <location>
        <begin position="217"/>
        <end position="224"/>
    </location>
</feature>
<feature type="helix" evidence="2">
    <location>
        <begin position="228"/>
        <end position="235"/>
    </location>
</feature>
<feature type="turn" evidence="2">
    <location>
        <begin position="236"/>
        <end position="238"/>
    </location>
</feature>
<feature type="strand" evidence="2">
    <location>
        <begin position="241"/>
        <end position="244"/>
    </location>
</feature>
<feature type="helix" evidence="2">
    <location>
        <begin position="246"/>
        <end position="249"/>
    </location>
</feature>
<feature type="helix" evidence="2">
    <location>
        <begin position="254"/>
        <end position="263"/>
    </location>
</feature>
<evidence type="ECO:0000255" key="1">
    <source>
        <dbReference type="HAMAP-Rule" id="MF_00134"/>
    </source>
</evidence>
<evidence type="ECO:0007829" key="2">
    <source>
        <dbReference type="PDB" id="3TSM"/>
    </source>
</evidence>
<comment type="catalytic activity">
    <reaction evidence="1">
        <text>1-(2-carboxyphenylamino)-1-deoxy-D-ribulose 5-phosphate + H(+) = (1S,2R)-1-C-(indol-3-yl)glycerol 3-phosphate + CO2 + H2O</text>
        <dbReference type="Rhea" id="RHEA:23476"/>
        <dbReference type="ChEBI" id="CHEBI:15377"/>
        <dbReference type="ChEBI" id="CHEBI:15378"/>
        <dbReference type="ChEBI" id="CHEBI:16526"/>
        <dbReference type="ChEBI" id="CHEBI:58613"/>
        <dbReference type="ChEBI" id="CHEBI:58866"/>
        <dbReference type="EC" id="4.1.1.48"/>
    </reaction>
</comment>
<comment type="pathway">
    <text evidence="1">Amino-acid biosynthesis; L-tryptophan biosynthesis; L-tryptophan from chorismate: step 4/5.</text>
</comment>
<comment type="similarity">
    <text evidence="1">Belongs to the TrpC family.</text>
</comment>
<protein>
    <recommendedName>
        <fullName evidence="1">Indole-3-glycerol phosphate synthase</fullName>
        <shortName evidence="1">IGPS</shortName>
        <ecNumber evidence="1">4.1.1.48</ecNumber>
    </recommendedName>
</protein>
<dbReference type="EC" id="4.1.1.48" evidence="1"/>
<dbReference type="EMBL" id="AM040264">
    <property type="protein sequence ID" value="CAJ11120.1"/>
    <property type="molecule type" value="Genomic_DNA"/>
</dbReference>
<dbReference type="RefSeq" id="WP_002964269.1">
    <property type="nucleotide sequence ID" value="NZ_KN046823.1"/>
</dbReference>
<dbReference type="PDB" id="3TSM">
    <property type="method" value="X-ray"/>
    <property type="resolution" value="2.15 A"/>
    <property type="chains" value="A/B=1-268"/>
</dbReference>
<dbReference type="PDBsum" id="3TSM"/>
<dbReference type="SMR" id="Q2YRR4"/>
<dbReference type="STRING" id="359391.BAB1_1164"/>
<dbReference type="GeneID" id="93016523"/>
<dbReference type="KEGG" id="bmf:BAB1_1164"/>
<dbReference type="PATRIC" id="fig|359391.11.peg.62"/>
<dbReference type="HOGENOM" id="CLU_034247_2_0_5"/>
<dbReference type="PhylomeDB" id="Q2YRR4"/>
<dbReference type="UniPathway" id="UPA00035">
    <property type="reaction ID" value="UER00043"/>
</dbReference>
<dbReference type="EvolutionaryTrace" id="Q2YRR4"/>
<dbReference type="Proteomes" id="UP000002719">
    <property type="component" value="Chromosome I"/>
</dbReference>
<dbReference type="GO" id="GO:0004425">
    <property type="term" value="F:indole-3-glycerol-phosphate synthase activity"/>
    <property type="evidence" value="ECO:0007669"/>
    <property type="project" value="UniProtKB-UniRule"/>
</dbReference>
<dbReference type="GO" id="GO:0004640">
    <property type="term" value="F:phosphoribosylanthranilate isomerase activity"/>
    <property type="evidence" value="ECO:0007669"/>
    <property type="project" value="TreeGrafter"/>
</dbReference>
<dbReference type="GO" id="GO:0000162">
    <property type="term" value="P:L-tryptophan biosynthetic process"/>
    <property type="evidence" value="ECO:0007669"/>
    <property type="project" value="UniProtKB-UniRule"/>
</dbReference>
<dbReference type="CDD" id="cd00331">
    <property type="entry name" value="IGPS"/>
    <property type="match status" value="1"/>
</dbReference>
<dbReference type="FunFam" id="3.20.20.70:FF:000024">
    <property type="entry name" value="Indole-3-glycerol phosphate synthase"/>
    <property type="match status" value="1"/>
</dbReference>
<dbReference type="Gene3D" id="3.20.20.70">
    <property type="entry name" value="Aldolase class I"/>
    <property type="match status" value="1"/>
</dbReference>
<dbReference type="HAMAP" id="MF_00134_B">
    <property type="entry name" value="IGPS_B"/>
    <property type="match status" value="1"/>
</dbReference>
<dbReference type="InterPro" id="IPR013785">
    <property type="entry name" value="Aldolase_TIM"/>
</dbReference>
<dbReference type="InterPro" id="IPR045186">
    <property type="entry name" value="Indole-3-glycerol_P_synth"/>
</dbReference>
<dbReference type="InterPro" id="IPR013798">
    <property type="entry name" value="Indole-3-glycerol_P_synth_dom"/>
</dbReference>
<dbReference type="InterPro" id="IPR001468">
    <property type="entry name" value="Indole-3-GlycerolPSynthase_CS"/>
</dbReference>
<dbReference type="InterPro" id="IPR011060">
    <property type="entry name" value="RibuloseP-bd_barrel"/>
</dbReference>
<dbReference type="NCBIfam" id="NF001370">
    <property type="entry name" value="PRK00278.1-2"/>
    <property type="match status" value="1"/>
</dbReference>
<dbReference type="NCBIfam" id="NF001373">
    <property type="entry name" value="PRK00278.1-6"/>
    <property type="match status" value="1"/>
</dbReference>
<dbReference type="NCBIfam" id="NF001377">
    <property type="entry name" value="PRK00278.2-4"/>
    <property type="match status" value="1"/>
</dbReference>
<dbReference type="PANTHER" id="PTHR22854:SF2">
    <property type="entry name" value="INDOLE-3-GLYCEROL-PHOSPHATE SYNTHASE"/>
    <property type="match status" value="1"/>
</dbReference>
<dbReference type="PANTHER" id="PTHR22854">
    <property type="entry name" value="TRYPTOPHAN BIOSYNTHESIS PROTEIN"/>
    <property type="match status" value="1"/>
</dbReference>
<dbReference type="Pfam" id="PF00218">
    <property type="entry name" value="IGPS"/>
    <property type="match status" value="1"/>
</dbReference>
<dbReference type="SUPFAM" id="SSF51366">
    <property type="entry name" value="Ribulose-phoshate binding barrel"/>
    <property type="match status" value="1"/>
</dbReference>
<dbReference type="PROSITE" id="PS00614">
    <property type="entry name" value="IGPS"/>
    <property type="match status" value="1"/>
</dbReference>
<proteinExistence type="evidence at protein level"/>
<gene>
    <name evidence="1" type="primary">trpC</name>
    <name type="ordered locus">BAB1_1164</name>
</gene>